<feature type="chain" id="PRO_0000202840" description="Putative uncharacterized protein YGR182C">
    <location>
        <begin position="1"/>
        <end position="117"/>
    </location>
</feature>
<dbReference type="EMBL" id="X99074">
    <property type="protein sequence ID" value="CAA67527.1"/>
    <property type="molecule type" value="Genomic_DNA"/>
</dbReference>
<dbReference type="EMBL" id="Z72966">
    <property type="protein sequence ID" value="CAA97208.1"/>
    <property type="molecule type" value="Genomic_DNA"/>
</dbReference>
<dbReference type="EMBL" id="AY693340">
    <property type="protein sequence ID" value="AAT93359.1"/>
    <property type="molecule type" value="Genomic_DNA"/>
</dbReference>
<dbReference type="PIR" id="S64496">
    <property type="entry name" value="S64496"/>
</dbReference>
<dbReference type="DIP" id="DIP-4032N"/>
<dbReference type="IntAct" id="P53300">
    <property type="interactions" value="1"/>
</dbReference>
<dbReference type="STRING" id="4932.YGR182C"/>
<dbReference type="PaxDb" id="4932-YGR182C"/>
<dbReference type="EnsemblFungi" id="YGR182C_mRNA">
    <property type="protein sequence ID" value="YGR182C"/>
    <property type="gene ID" value="YGR182C"/>
</dbReference>
<dbReference type="AGR" id="SGD:S000003414"/>
<dbReference type="SGD" id="S000003414">
    <property type="gene designation" value="YGR182C"/>
</dbReference>
<dbReference type="HOGENOM" id="CLU_2086680_0_0_1"/>
<proteinExistence type="uncertain"/>
<reference key="1">
    <citation type="journal article" date="1997" name="Yeast">
        <title>DNA sequence analysis of a 23,002 bp DNA fragment of the right arm of Saccharomyces cerevisiae chromosome VII.</title>
        <authorList>
            <person name="Arroyo J."/>
            <person name="Garcia-Gonzalez M."/>
            <person name="Garcia-Saez M.I."/>
            <person name="Sanchez-Perez M."/>
            <person name="Nombela C."/>
        </authorList>
    </citation>
    <scope>NUCLEOTIDE SEQUENCE [GENOMIC DNA]</scope>
    <source>
        <strain>ATCC 204508 / S288c</strain>
    </source>
</reference>
<reference key="2">
    <citation type="journal article" date="1997" name="Nature">
        <title>The nucleotide sequence of Saccharomyces cerevisiae chromosome VII.</title>
        <authorList>
            <person name="Tettelin H."/>
            <person name="Agostoni-Carbone M.L."/>
            <person name="Albermann K."/>
            <person name="Albers M."/>
            <person name="Arroyo J."/>
            <person name="Backes U."/>
            <person name="Barreiros T."/>
            <person name="Bertani I."/>
            <person name="Bjourson A.J."/>
            <person name="Brueckner M."/>
            <person name="Bruschi C.V."/>
            <person name="Carignani G."/>
            <person name="Castagnoli L."/>
            <person name="Cerdan E."/>
            <person name="Clemente M.L."/>
            <person name="Coblenz A."/>
            <person name="Coglievina M."/>
            <person name="Coissac E."/>
            <person name="Defoor E."/>
            <person name="Del Bino S."/>
            <person name="Delius H."/>
            <person name="Delneri D."/>
            <person name="de Wergifosse P."/>
            <person name="Dujon B."/>
            <person name="Durand P."/>
            <person name="Entian K.-D."/>
            <person name="Eraso P."/>
            <person name="Escribano V."/>
            <person name="Fabiani L."/>
            <person name="Fartmann B."/>
            <person name="Feroli F."/>
            <person name="Feuermann M."/>
            <person name="Frontali L."/>
            <person name="Garcia-Gonzalez M."/>
            <person name="Garcia-Saez M.I."/>
            <person name="Goffeau A."/>
            <person name="Guerreiro P."/>
            <person name="Hani J."/>
            <person name="Hansen M."/>
            <person name="Hebling U."/>
            <person name="Hernandez K."/>
            <person name="Heumann K."/>
            <person name="Hilger F."/>
            <person name="Hofmann B."/>
            <person name="Indge K.J."/>
            <person name="James C.M."/>
            <person name="Klima R."/>
            <person name="Koetter P."/>
            <person name="Kramer B."/>
            <person name="Kramer W."/>
            <person name="Lauquin G."/>
            <person name="Leuther H."/>
            <person name="Louis E.J."/>
            <person name="Maillier E."/>
            <person name="Marconi A."/>
            <person name="Martegani E."/>
            <person name="Mazon M.J."/>
            <person name="Mazzoni C."/>
            <person name="McReynolds A.D.K."/>
            <person name="Melchioretto P."/>
            <person name="Mewes H.-W."/>
            <person name="Minenkova O."/>
            <person name="Mueller-Auer S."/>
            <person name="Nawrocki A."/>
            <person name="Netter P."/>
            <person name="Neu R."/>
            <person name="Nombela C."/>
            <person name="Oliver S.G."/>
            <person name="Panzeri L."/>
            <person name="Paoluzi S."/>
            <person name="Plevani P."/>
            <person name="Portetelle D."/>
            <person name="Portillo F."/>
            <person name="Potier S."/>
            <person name="Purnelle B."/>
            <person name="Rieger M."/>
            <person name="Riles L."/>
            <person name="Rinaldi T."/>
            <person name="Robben J."/>
            <person name="Rodrigues-Pousada C."/>
            <person name="Rodriguez-Belmonte E."/>
            <person name="Rodriguez-Torres A.M."/>
            <person name="Rose M."/>
            <person name="Ruzzi M."/>
            <person name="Saliola M."/>
            <person name="Sanchez-Perez M."/>
            <person name="Schaefer B."/>
            <person name="Schaefer M."/>
            <person name="Scharfe M."/>
            <person name="Schmidheini T."/>
            <person name="Schreer A."/>
            <person name="Skala J."/>
            <person name="Souciet J.-L."/>
            <person name="Steensma H.Y."/>
            <person name="Talla E."/>
            <person name="Thierry A."/>
            <person name="Vandenbol M."/>
            <person name="van der Aart Q.J.M."/>
            <person name="Van Dyck L."/>
            <person name="Vanoni M."/>
            <person name="Verhasselt P."/>
            <person name="Voet M."/>
            <person name="Volckaert G."/>
            <person name="Wambutt R."/>
            <person name="Watson M.D."/>
            <person name="Weber N."/>
            <person name="Wedler E."/>
            <person name="Wedler H."/>
            <person name="Wipfli P."/>
            <person name="Wolf K."/>
            <person name="Wright L.F."/>
            <person name="Zaccaria P."/>
            <person name="Zimmermann M."/>
            <person name="Zollner A."/>
            <person name="Kleine K."/>
        </authorList>
    </citation>
    <scope>NUCLEOTIDE SEQUENCE [LARGE SCALE GENOMIC DNA]</scope>
    <source>
        <strain>ATCC 204508 / S288c</strain>
    </source>
</reference>
<reference key="3">
    <citation type="journal article" date="2014" name="G3 (Bethesda)">
        <title>The reference genome sequence of Saccharomyces cerevisiae: Then and now.</title>
        <authorList>
            <person name="Engel S.R."/>
            <person name="Dietrich F.S."/>
            <person name="Fisk D.G."/>
            <person name="Binkley G."/>
            <person name="Balakrishnan R."/>
            <person name="Costanzo M.C."/>
            <person name="Dwight S.S."/>
            <person name="Hitz B.C."/>
            <person name="Karra K."/>
            <person name="Nash R.S."/>
            <person name="Weng S."/>
            <person name="Wong E.D."/>
            <person name="Lloyd P."/>
            <person name="Skrzypek M.S."/>
            <person name="Miyasato S.R."/>
            <person name="Simison M."/>
            <person name="Cherry J.M."/>
        </authorList>
    </citation>
    <scope>GENOME REANNOTATION</scope>
    <source>
        <strain>ATCC 204508 / S288c</strain>
    </source>
</reference>
<reference key="4">
    <citation type="journal article" date="2007" name="Genome Res.">
        <title>Approaching a complete repository of sequence-verified protein-encoding clones for Saccharomyces cerevisiae.</title>
        <authorList>
            <person name="Hu Y."/>
            <person name="Rolfs A."/>
            <person name="Bhullar B."/>
            <person name="Murthy T.V.S."/>
            <person name="Zhu C."/>
            <person name="Berger M.F."/>
            <person name="Camargo A.A."/>
            <person name="Kelley F."/>
            <person name="McCarron S."/>
            <person name="Jepson D."/>
            <person name="Richardson A."/>
            <person name="Raphael J."/>
            <person name="Moreira D."/>
            <person name="Taycher E."/>
            <person name="Zuo D."/>
            <person name="Mohr S."/>
            <person name="Kane M.F."/>
            <person name="Williamson J."/>
            <person name="Simpson A.J.G."/>
            <person name="Bulyk M.L."/>
            <person name="Harlow E."/>
            <person name="Marsischky G."/>
            <person name="Kolodner R.D."/>
            <person name="LaBaer J."/>
        </authorList>
    </citation>
    <scope>NUCLEOTIDE SEQUENCE [GENOMIC DNA]</scope>
    <source>
        <strain>ATCC 204508 / S288c</strain>
    </source>
</reference>
<reference key="5">
    <citation type="journal article" date="2005" name="Physiol. Genomics">
        <title>Gene expression profiling and phenotype analyses of S. cerevisiae in response to changing copper reveals six genes with new roles in copper and iron metabolism.</title>
        <authorList>
            <person name="van Bakel H."/>
            <person name="Strengman E."/>
            <person name="Wijmenga C."/>
            <person name="Holstege F.C.P."/>
        </authorList>
    </citation>
    <scope>INDUCTION</scope>
</reference>
<protein>
    <recommendedName>
        <fullName>Putative uncharacterized protein YGR182C</fullName>
    </recommendedName>
</protein>
<comment type="induction">
    <text evidence="1">Repressed under low and increased under high copper conditions.</text>
</comment>
<comment type="miscellaneous">
    <text evidence="2">Partially overlaps TIM13.</text>
</comment>
<comment type="caution">
    <text evidence="3">Product of a dubious gene prediction unlikely to encode a functional protein. Because of that it is not part of the S.cerevisiae S288c complete/reference proteome set.</text>
</comment>
<gene>
    <name type="ordered locus">YGR182C</name>
    <name type="ORF">G7160</name>
</gene>
<evidence type="ECO:0000269" key="1">
    <source>
    </source>
</evidence>
<evidence type="ECO:0000305" key="2"/>
<evidence type="ECO:0000305" key="3">
    <source>
    </source>
</evidence>
<sequence>MSRQSAFKFQNGNRHERACLSDVHKILIIILYSTKGKRELGKRITHFMYIHIFCTYLYQASIVQYCSSTLLNVIAFSWYPLNLIYKYEYILRSKLILMVCLDFARSGGVLDSGDVSL</sequence>
<accession>P53300</accession>
<name>YG45_YEAST</name>
<organism>
    <name type="scientific">Saccharomyces cerevisiae (strain ATCC 204508 / S288c)</name>
    <name type="common">Baker's yeast</name>
    <dbReference type="NCBI Taxonomy" id="559292"/>
    <lineage>
        <taxon>Eukaryota</taxon>
        <taxon>Fungi</taxon>
        <taxon>Dikarya</taxon>
        <taxon>Ascomycota</taxon>
        <taxon>Saccharomycotina</taxon>
        <taxon>Saccharomycetes</taxon>
        <taxon>Saccharomycetales</taxon>
        <taxon>Saccharomycetaceae</taxon>
        <taxon>Saccharomyces</taxon>
    </lineage>
</organism>